<name>CRBA2_MOUSE</name>
<dbReference type="EMBL" id="AJ272227">
    <property type="protein sequence ID" value="CAB75585.1"/>
    <property type="molecule type" value="mRNA"/>
</dbReference>
<dbReference type="EMBL" id="AK021374">
    <property type="protein sequence ID" value="BAB32389.1"/>
    <property type="molecule type" value="mRNA"/>
</dbReference>
<dbReference type="EMBL" id="AY160973">
    <property type="protein sequence ID" value="AAN78172.1"/>
    <property type="molecule type" value="mRNA"/>
</dbReference>
<dbReference type="EMBL" id="BC052746">
    <property type="protein sequence ID" value="AAH52746.1"/>
    <property type="molecule type" value="mRNA"/>
</dbReference>
<dbReference type="EMBL" id="BC056989">
    <property type="protein sequence ID" value="AAH56989.1"/>
    <property type="molecule type" value="mRNA"/>
</dbReference>
<dbReference type="CCDS" id="CCDS15059.1"/>
<dbReference type="RefSeq" id="NP_001418745.1">
    <property type="nucleotide sequence ID" value="NM_001431816.1"/>
</dbReference>
<dbReference type="RefSeq" id="NP_067516.1">
    <property type="nucleotide sequence ID" value="NM_021541.4"/>
</dbReference>
<dbReference type="RefSeq" id="XP_006495719.1">
    <property type="nucleotide sequence ID" value="XM_006495656.3"/>
</dbReference>
<dbReference type="SMR" id="Q9JJV1"/>
<dbReference type="BioGRID" id="198911">
    <property type="interactions" value="3"/>
</dbReference>
<dbReference type="FunCoup" id="Q9JJV1">
    <property type="interactions" value="8"/>
</dbReference>
<dbReference type="STRING" id="10090.ENSMUSP00000006721"/>
<dbReference type="iPTMnet" id="Q9JJV1"/>
<dbReference type="PhosphoSitePlus" id="Q9JJV1"/>
<dbReference type="PaxDb" id="10090-ENSMUSP00000006721"/>
<dbReference type="ProteomicsDB" id="284115"/>
<dbReference type="Antibodypedia" id="34295">
    <property type="antibodies" value="50 antibodies from 14 providers"/>
</dbReference>
<dbReference type="DNASU" id="12958"/>
<dbReference type="Ensembl" id="ENSMUST00000006721.3">
    <property type="protein sequence ID" value="ENSMUSP00000006721.3"/>
    <property type="gene ID" value="ENSMUSG00000006546.4"/>
</dbReference>
<dbReference type="GeneID" id="12958"/>
<dbReference type="KEGG" id="mmu:12958"/>
<dbReference type="UCSC" id="uc007bni.2">
    <property type="organism name" value="mouse"/>
</dbReference>
<dbReference type="AGR" id="MGI:104336"/>
<dbReference type="CTD" id="1412"/>
<dbReference type="MGI" id="MGI:104336">
    <property type="gene designation" value="Cryba2"/>
</dbReference>
<dbReference type="VEuPathDB" id="HostDB:ENSMUSG00000006546"/>
<dbReference type="eggNOG" id="ENOG502QVIR">
    <property type="taxonomic scope" value="Eukaryota"/>
</dbReference>
<dbReference type="GeneTree" id="ENSGT00940000160306"/>
<dbReference type="HOGENOM" id="CLU_081883_0_0_1"/>
<dbReference type="InParanoid" id="Q9JJV1"/>
<dbReference type="OMA" id="SDCANIA"/>
<dbReference type="OrthoDB" id="10067219at2759"/>
<dbReference type="PhylomeDB" id="Q9JJV1"/>
<dbReference type="TreeFam" id="TF331401"/>
<dbReference type="BioGRID-ORCS" id="12958">
    <property type="hits" value="1 hit in 79 CRISPR screens"/>
</dbReference>
<dbReference type="ChiTaRS" id="Cryba2">
    <property type="organism name" value="mouse"/>
</dbReference>
<dbReference type="PRO" id="PR:Q9JJV1"/>
<dbReference type="Proteomes" id="UP000000589">
    <property type="component" value="Chromosome 1"/>
</dbReference>
<dbReference type="RNAct" id="Q9JJV1">
    <property type="molecule type" value="protein"/>
</dbReference>
<dbReference type="Bgee" id="ENSMUSG00000006546">
    <property type="expression patterns" value="Expressed in lens of camera-type eye and 52 other cell types or tissues"/>
</dbReference>
<dbReference type="ExpressionAtlas" id="Q9JJV1">
    <property type="expression patterns" value="baseline and differential"/>
</dbReference>
<dbReference type="GO" id="GO:0042802">
    <property type="term" value="F:identical protein binding"/>
    <property type="evidence" value="ECO:0000353"/>
    <property type="project" value="MGI"/>
</dbReference>
<dbReference type="GO" id="GO:0005212">
    <property type="term" value="F:structural constituent of eye lens"/>
    <property type="evidence" value="ECO:0000304"/>
    <property type="project" value="MGI"/>
</dbReference>
<dbReference type="GO" id="GO:0002088">
    <property type="term" value="P:lens development in camera-type eye"/>
    <property type="evidence" value="ECO:0000315"/>
    <property type="project" value="MGI"/>
</dbReference>
<dbReference type="FunFam" id="2.60.20.10:FF:000012">
    <property type="entry name" value="Beta-crystallin A2"/>
    <property type="match status" value="1"/>
</dbReference>
<dbReference type="FunFam" id="2.60.20.10:FF:000004">
    <property type="entry name" value="Crystallin beta A4"/>
    <property type="match status" value="1"/>
</dbReference>
<dbReference type="Gene3D" id="2.60.20.10">
    <property type="entry name" value="Crystallins"/>
    <property type="match status" value="2"/>
</dbReference>
<dbReference type="InterPro" id="IPR050252">
    <property type="entry name" value="Beta/Gamma-Crystallin"/>
</dbReference>
<dbReference type="InterPro" id="IPR001064">
    <property type="entry name" value="Beta/gamma_crystallin"/>
</dbReference>
<dbReference type="InterPro" id="IPR011024">
    <property type="entry name" value="G_crystallin-like"/>
</dbReference>
<dbReference type="PANTHER" id="PTHR11818:SF7">
    <property type="entry name" value="BETA-CRYSTALLIN A2"/>
    <property type="match status" value="1"/>
</dbReference>
<dbReference type="PANTHER" id="PTHR11818">
    <property type="entry name" value="BETA/GAMMA CRYSTALLIN"/>
    <property type="match status" value="1"/>
</dbReference>
<dbReference type="Pfam" id="PF00030">
    <property type="entry name" value="Crystall"/>
    <property type="match status" value="2"/>
</dbReference>
<dbReference type="PRINTS" id="PR01367">
    <property type="entry name" value="BGCRYSTALLIN"/>
</dbReference>
<dbReference type="SMART" id="SM00247">
    <property type="entry name" value="XTALbg"/>
    <property type="match status" value="2"/>
</dbReference>
<dbReference type="SUPFAM" id="SSF49695">
    <property type="entry name" value="gamma-Crystallin-like"/>
    <property type="match status" value="1"/>
</dbReference>
<dbReference type="PROSITE" id="PS50915">
    <property type="entry name" value="CRYSTALLIN_BETA_GAMMA"/>
    <property type="match status" value="4"/>
</dbReference>
<protein>
    <recommendedName>
        <fullName>Beta-crystallin A2</fullName>
    </recommendedName>
    <alternativeName>
        <fullName>Beta-A2 crystallin</fullName>
    </alternativeName>
</protein>
<feature type="chain" id="PRO_0000057540" description="Beta-crystallin A2">
    <location>
        <begin position="1"/>
        <end position="197"/>
    </location>
</feature>
<feature type="domain" description="Beta/gamma crystallin 'Greek key' 1" evidence="2">
    <location>
        <begin position="12"/>
        <end position="52"/>
    </location>
</feature>
<feature type="domain" description="Beta/gamma crystallin 'Greek key' 2" evidence="2">
    <location>
        <begin position="53"/>
        <end position="99"/>
    </location>
</feature>
<feature type="domain" description="Beta/gamma crystallin 'Greek key' 3" evidence="2">
    <location>
        <begin position="106"/>
        <end position="147"/>
    </location>
</feature>
<feature type="domain" description="Beta/gamma crystallin 'Greek key' 4" evidence="2">
    <location>
        <begin position="148"/>
        <end position="196"/>
    </location>
</feature>
<feature type="region of interest" description="N-terminal arm">
    <location>
        <begin position="1"/>
        <end position="11"/>
    </location>
</feature>
<feature type="region of interest" description="Connecting peptide">
    <location>
        <begin position="100"/>
        <end position="105"/>
    </location>
</feature>
<accession>Q9JJV1</accession>
<accession>Q540J7</accession>
<comment type="function">
    <text>Crystallins are the dominant structural components of the vertebrate eye lens.</text>
</comment>
<comment type="subunit">
    <text evidence="1">Homo/heterodimer, or complexes of higher-order. The structure of beta-crystallin oligomers seems to be stabilized through interactions between the N-terminal arms (By similarity).</text>
</comment>
<comment type="domain">
    <text>Has a two-domain beta-structure, folded into four very similar Greek key motifs.</text>
</comment>
<comment type="similarity">
    <text evidence="3">Belongs to the beta/gamma-crystallin family.</text>
</comment>
<sequence length="197" mass="22237">MSSAPAPGSAPVCLTLWDEEDFQGRRCRLLSDCANVCERGALRRVRSVKVENGAWVAFEYPDFQGQQFILEKGDYPCWSAWSGSSGHHSNQLLSFRPVLCANHSDSRVTLFEGENFQGCKFELSDDYPSLPSMGWTSKDVGSLKVSSGAWVAYQYPGYRGYQYVLERDRHSGEFRTYSDFGTQAHTGQLQSIRRVQH</sequence>
<evidence type="ECO:0000250" key="1"/>
<evidence type="ECO:0000255" key="2">
    <source>
        <dbReference type="PROSITE-ProRule" id="PRU00028"/>
    </source>
</evidence>
<evidence type="ECO:0000305" key="3"/>
<reference key="1">
    <citation type="submission" date="2000-02" db="EMBL/GenBank/DDBJ databases">
        <title>Sequence analysis of beta-A2-, beta-A4- and beta-B3-crystallin cDNA completes the identification of the members of this gene family in the mouse.</title>
        <authorList>
            <person name="Graw J."/>
        </authorList>
    </citation>
    <scope>NUCLEOTIDE SEQUENCE [MRNA]</scope>
</reference>
<reference key="2">
    <citation type="journal article" date="2005" name="Science">
        <title>The transcriptional landscape of the mammalian genome.</title>
        <authorList>
            <person name="Carninci P."/>
            <person name="Kasukawa T."/>
            <person name="Katayama S."/>
            <person name="Gough J."/>
            <person name="Frith M.C."/>
            <person name="Maeda N."/>
            <person name="Oyama R."/>
            <person name="Ravasi T."/>
            <person name="Lenhard B."/>
            <person name="Wells C."/>
            <person name="Kodzius R."/>
            <person name="Shimokawa K."/>
            <person name="Bajic V.B."/>
            <person name="Brenner S.E."/>
            <person name="Batalov S."/>
            <person name="Forrest A.R."/>
            <person name="Zavolan M."/>
            <person name="Davis M.J."/>
            <person name="Wilming L.G."/>
            <person name="Aidinis V."/>
            <person name="Allen J.E."/>
            <person name="Ambesi-Impiombato A."/>
            <person name="Apweiler R."/>
            <person name="Aturaliya R.N."/>
            <person name="Bailey T.L."/>
            <person name="Bansal M."/>
            <person name="Baxter L."/>
            <person name="Beisel K.W."/>
            <person name="Bersano T."/>
            <person name="Bono H."/>
            <person name="Chalk A.M."/>
            <person name="Chiu K.P."/>
            <person name="Choudhary V."/>
            <person name="Christoffels A."/>
            <person name="Clutterbuck D.R."/>
            <person name="Crowe M.L."/>
            <person name="Dalla E."/>
            <person name="Dalrymple B.P."/>
            <person name="de Bono B."/>
            <person name="Della Gatta G."/>
            <person name="di Bernardo D."/>
            <person name="Down T."/>
            <person name="Engstrom P."/>
            <person name="Fagiolini M."/>
            <person name="Faulkner G."/>
            <person name="Fletcher C.F."/>
            <person name="Fukushima T."/>
            <person name="Furuno M."/>
            <person name="Futaki S."/>
            <person name="Gariboldi M."/>
            <person name="Georgii-Hemming P."/>
            <person name="Gingeras T.R."/>
            <person name="Gojobori T."/>
            <person name="Green R.E."/>
            <person name="Gustincich S."/>
            <person name="Harbers M."/>
            <person name="Hayashi Y."/>
            <person name="Hensch T.K."/>
            <person name="Hirokawa N."/>
            <person name="Hill D."/>
            <person name="Huminiecki L."/>
            <person name="Iacono M."/>
            <person name="Ikeo K."/>
            <person name="Iwama A."/>
            <person name="Ishikawa T."/>
            <person name="Jakt M."/>
            <person name="Kanapin A."/>
            <person name="Katoh M."/>
            <person name="Kawasawa Y."/>
            <person name="Kelso J."/>
            <person name="Kitamura H."/>
            <person name="Kitano H."/>
            <person name="Kollias G."/>
            <person name="Krishnan S.P."/>
            <person name="Kruger A."/>
            <person name="Kummerfeld S.K."/>
            <person name="Kurochkin I.V."/>
            <person name="Lareau L.F."/>
            <person name="Lazarevic D."/>
            <person name="Lipovich L."/>
            <person name="Liu J."/>
            <person name="Liuni S."/>
            <person name="McWilliam S."/>
            <person name="Madan Babu M."/>
            <person name="Madera M."/>
            <person name="Marchionni L."/>
            <person name="Matsuda H."/>
            <person name="Matsuzawa S."/>
            <person name="Miki H."/>
            <person name="Mignone F."/>
            <person name="Miyake S."/>
            <person name="Morris K."/>
            <person name="Mottagui-Tabar S."/>
            <person name="Mulder N."/>
            <person name="Nakano N."/>
            <person name="Nakauchi H."/>
            <person name="Ng P."/>
            <person name="Nilsson R."/>
            <person name="Nishiguchi S."/>
            <person name="Nishikawa S."/>
            <person name="Nori F."/>
            <person name="Ohara O."/>
            <person name="Okazaki Y."/>
            <person name="Orlando V."/>
            <person name="Pang K.C."/>
            <person name="Pavan W.J."/>
            <person name="Pavesi G."/>
            <person name="Pesole G."/>
            <person name="Petrovsky N."/>
            <person name="Piazza S."/>
            <person name="Reed J."/>
            <person name="Reid J.F."/>
            <person name="Ring B.Z."/>
            <person name="Ringwald M."/>
            <person name="Rost B."/>
            <person name="Ruan Y."/>
            <person name="Salzberg S.L."/>
            <person name="Sandelin A."/>
            <person name="Schneider C."/>
            <person name="Schoenbach C."/>
            <person name="Sekiguchi K."/>
            <person name="Semple C.A."/>
            <person name="Seno S."/>
            <person name="Sessa L."/>
            <person name="Sheng Y."/>
            <person name="Shibata Y."/>
            <person name="Shimada H."/>
            <person name="Shimada K."/>
            <person name="Silva D."/>
            <person name="Sinclair B."/>
            <person name="Sperling S."/>
            <person name="Stupka E."/>
            <person name="Sugiura K."/>
            <person name="Sultana R."/>
            <person name="Takenaka Y."/>
            <person name="Taki K."/>
            <person name="Tammoja K."/>
            <person name="Tan S.L."/>
            <person name="Tang S."/>
            <person name="Taylor M.S."/>
            <person name="Tegner J."/>
            <person name="Teichmann S.A."/>
            <person name="Ueda H.R."/>
            <person name="van Nimwegen E."/>
            <person name="Verardo R."/>
            <person name="Wei C.L."/>
            <person name="Yagi K."/>
            <person name="Yamanishi H."/>
            <person name="Zabarovsky E."/>
            <person name="Zhu S."/>
            <person name="Zimmer A."/>
            <person name="Hide W."/>
            <person name="Bult C."/>
            <person name="Grimmond S.M."/>
            <person name="Teasdale R.D."/>
            <person name="Liu E.T."/>
            <person name="Brusic V."/>
            <person name="Quackenbush J."/>
            <person name="Wahlestedt C."/>
            <person name="Mattick J.S."/>
            <person name="Hume D.A."/>
            <person name="Kai C."/>
            <person name="Sasaki D."/>
            <person name="Tomaru Y."/>
            <person name="Fukuda S."/>
            <person name="Kanamori-Katayama M."/>
            <person name="Suzuki M."/>
            <person name="Aoki J."/>
            <person name="Arakawa T."/>
            <person name="Iida J."/>
            <person name="Imamura K."/>
            <person name="Itoh M."/>
            <person name="Kato T."/>
            <person name="Kawaji H."/>
            <person name="Kawagashira N."/>
            <person name="Kawashima T."/>
            <person name="Kojima M."/>
            <person name="Kondo S."/>
            <person name="Konno H."/>
            <person name="Nakano K."/>
            <person name="Ninomiya N."/>
            <person name="Nishio T."/>
            <person name="Okada M."/>
            <person name="Plessy C."/>
            <person name="Shibata K."/>
            <person name="Shiraki T."/>
            <person name="Suzuki S."/>
            <person name="Tagami M."/>
            <person name="Waki K."/>
            <person name="Watahiki A."/>
            <person name="Okamura-Oho Y."/>
            <person name="Suzuki H."/>
            <person name="Kawai J."/>
            <person name="Hayashizaki Y."/>
        </authorList>
    </citation>
    <scope>NUCLEOTIDE SEQUENCE [LARGE SCALE MRNA]</scope>
    <source>
        <strain>C57BL/6J</strain>
        <tissue>Eye</tissue>
    </source>
</reference>
<reference key="3">
    <citation type="journal article" date="2009" name="PLoS Biol.">
        <title>Lineage-specific biology revealed by a finished genome assembly of the mouse.</title>
        <authorList>
            <person name="Church D.M."/>
            <person name="Goodstadt L."/>
            <person name="Hillier L.W."/>
            <person name="Zody M.C."/>
            <person name="Goldstein S."/>
            <person name="She X."/>
            <person name="Bult C.J."/>
            <person name="Agarwala R."/>
            <person name="Cherry J.L."/>
            <person name="DiCuccio M."/>
            <person name="Hlavina W."/>
            <person name="Kapustin Y."/>
            <person name="Meric P."/>
            <person name="Maglott D."/>
            <person name="Birtle Z."/>
            <person name="Marques A.C."/>
            <person name="Graves T."/>
            <person name="Zhou S."/>
            <person name="Teague B."/>
            <person name="Potamousis K."/>
            <person name="Churas C."/>
            <person name="Place M."/>
            <person name="Herschleb J."/>
            <person name="Runnheim R."/>
            <person name="Forrest D."/>
            <person name="Amos-Landgraf J."/>
            <person name="Schwartz D.C."/>
            <person name="Cheng Z."/>
            <person name="Lindblad-Toh K."/>
            <person name="Eichler E.E."/>
            <person name="Ponting C.P."/>
        </authorList>
    </citation>
    <scope>NUCLEOTIDE SEQUENCE [LARGE SCALE GENOMIC DNA]</scope>
    <source>
        <strain>C57BL/6J</strain>
    </source>
</reference>
<reference key="4">
    <citation type="journal article" date="2004" name="Genome Res.">
        <title>The status, quality, and expansion of the NIH full-length cDNA project: the Mammalian Gene Collection (MGC).</title>
        <authorList>
            <consortium name="The MGC Project Team"/>
        </authorList>
    </citation>
    <scope>NUCLEOTIDE SEQUENCE [LARGE SCALE MRNA]</scope>
    <source>
        <strain>C57BL/6J</strain>
        <tissue>Brain</tissue>
    </source>
</reference>
<keyword id="KW-0273">Eye lens protein</keyword>
<keyword id="KW-1185">Reference proteome</keyword>
<keyword id="KW-0677">Repeat</keyword>
<organism>
    <name type="scientific">Mus musculus</name>
    <name type="common">Mouse</name>
    <dbReference type="NCBI Taxonomy" id="10090"/>
    <lineage>
        <taxon>Eukaryota</taxon>
        <taxon>Metazoa</taxon>
        <taxon>Chordata</taxon>
        <taxon>Craniata</taxon>
        <taxon>Vertebrata</taxon>
        <taxon>Euteleostomi</taxon>
        <taxon>Mammalia</taxon>
        <taxon>Eutheria</taxon>
        <taxon>Euarchontoglires</taxon>
        <taxon>Glires</taxon>
        <taxon>Rodentia</taxon>
        <taxon>Myomorpha</taxon>
        <taxon>Muroidea</taxon>
        <taxon>Muridae</taxon>
        <taxon>Murinae</taxon>
        <taxon>Mus</taxon>
        <taxon>Mus</taxon>
    </lineage>
</organism>
<proteinExistence type="evidence at transcript level"/>
<gene>
    <name type="primary">Cryba2</name>
</gene>